<protein>
    <recommendedName>
        <fullName evidence="7 8 9">Mitogen-activated protein kinase 18</fullName>
        <shortName evidence="7 8 9">AtMPK18</shortName>
        <shortName evidence="7 8 9">MAP kinase 18</shortName>
        <ecNumber>2.7.11.24</ecNumber>
    </recommendedName>
</protein>
<organism>
    <name type="scientific">Arabidopsis thaliana</name>
    <name type="common">Mouse-ear cress</name>
    <dbReference type="NCBI Taxonomy" id="3702"/>
    <lineage>
        <taxon>Eukaryota</taxon>
        <taxon>Viridiplantae</taxon>
        <taxon>Streptophyta</taxon>
        <taxon>Embryophyta</taxon>
        <taxon>Tracheophyta</taxon>
        <taxon>Spermatophyta</taxon>
        <taxon>Magnoliopsida</taxon>
        <taxon>eudicotyledons</taxon>
        <taxon>Gunneridae</taxon>
        <taxon>Pentapetalae</taxon>
        <taxon>rosids</taxon>
        <taxon>malvids</taxon>
        <taxon>Brassicales</taxon>
        <taxon>Brassicaceae</taxon>
        <taxon>Camelineae</taxon>
        <taxon>Arabidopsis</taxon>
    </lineage>
</organism>
<comment type="function">
    <text evidence="5 6">Mitogen-activated protein kinase (MAPK) that is specifically regulated by PHS1 and MAPKKK20 and mediates signaling that regulates cortical microtubule functions, maybe through regulation of microtubule dynamic instability.</text>
</comment>
<comment type="catalytic activity">
    <reaction>
        <text>L-seryl-[protein] + ATP = O-phospho-L-seryl-[protein] + ADP + H(+)</text>
        <dbReference type="Rhea" id="RHEA:17989"/>
        <dbReference type="Rhea" id="RHEA-COMP:9863"/>
        <dbReference type="Rhea" id="RHEA-COMP:11604"/>
        <dbReference type="ChEBI" id="CHEBI:15378"/>
        <dbReference type="ChEBI" id="CHEBI:29999"/>
        <dbReference type="ChEBI" id="CHEBI:30616"/>
        <dbReference type="ChEBI" id="CHEBI:83421"/>
        <dbReference type="ChEBI" id="CHEBI:456216"/>
        <dbReference type="EC" id="2.7.11.24"/>
    </reaction>
</comment>
<comment type="catalytic activity">
    <reaction>
        <text>L-threonyl-[protein] + ATP = O-phospho-L-threonyl-[protein] + ADP + H(+)</text>
        <dbReference type="Rhea" id="RHEA:46608"/>
        <dbReference type="Rhea" id="RHEA-COMP:11060"/>
        <dbReference type="Rhea" id="RHEA-COMP:11605"/>
        <dbReference type="ChEBI" id="CHEBI:15378"/>
        <dbReference type="ChEBI" id="CHEBI:30013"/>
        <dbReference type="ChEBI" id="CHEBI:30616"/>
        <dbReference type="ChEBI" id="CHEBI:61977"/>
        <dbReference type="ChEBI" id="CHEBI:456216"/>
        <dbReference type="EC" id="2.7.11.24"/>
    </reaction>
</comment>
<comment type="activity regulation">
    <text evidence="5 10">Activated by threonine and tyrosine phosphorylation (Probable). Inactivated by phosphatase PHS1.</text>
</comment>
<comment type="subunit">
    <text evidence="5 6">Interacts with PHS1 (PubMed:19392697). Binds to MAPKKK20 (PubMed:28848569).</text>
</comment>
<comment type="interaction">
    <interactant intactId="EBI-1238534">
        <id>Q9C5C0</id>
    </interactant>
    <interactant intactId="EBI-4426649">
        <id>Q17TI5</id>
        <label>BRX</label>
    </interactant>
    <organismsDiffer>false</organismsDiffer>
    <experiments>3</experiments>
</comment>
<comment type="interaction">
    <interactant intactId="EBI-1238534">
        <id>Q9C5C0</id>
    </interactant>
    <interactant intactId="EBI-963606">
        <id>Q9LQT8</id>
        <label>GAI</label>
    </interactant>
    <organismsDiffer>false</organismsDiffer>
    <experiments>6</experiments>
</comment>
<comment type="interaction">
    <interactant intactId="EBI-1238534">
        <id>Q9C5C0</id>
    </interactant>
    <interactant intactId="EBI-2349366">
        <id>Q75QN6</id>
        <label>PHS1</label>
    </interactant>
    <organismsDiffer>false</organismsDiffer>
    <experiments>3</experiments>
</comment>
<comment type="interaction">
    <interactant intactId="EBI-1238534">
        <id>Q9C5C0</id>
    </interactant>
    <interactant intactId="EBI-963624">
        <id>Q9SLH3</id>
        <label>RGA</label>
    </interactant>
    <organismsDiffer>false</organismsDiffer>
    <experiments>4</experiments>
</comment>
<comment type="interaction">
    <interactant intactId="EBI-1238534">
        <id>Q9C5C0</id>
    </interactant>
    <interactant intactId="EBI-963665">
        <id>Q8GXW1</id>
        <label>RGL2</label>
    </interactant>
    <organismsDiffer>false</organismsDiffer>
    <experiments>3</experiments>
</comment>
<comment type="subcellular location">
    <subcellularLocation>
        <location evidence="6">Nucleus</location>
    </subcellularLocation>
    <subcellularLocation>
        <location evidence="5 6">Cytoplasm</location>
    </subcellularLocation>
</comment>
<comment type="tissue specificity">
    <text evidence="5 6">Expressed in roots, seedlings, leaves, flower buds, flowers and siliques.</text>
</comment>
<comment type="domain">
    <text>The TXY motif contains the threonine and tyrosine residues whose phosphorylation activates the MAP kinases.</text>
</comment>
<comment type="PTM">
    <text evidence="1 6">Dually phosphorylated on Thr-187 and Tyr-189, which activates the enzyme (By similarity). Phosphorylated by MAPKKK20 (PubMed:28848569).</text>
</comment>
<comment type="disruption phenotype">
    <text evidence="5 6">No visible phenotype under normal growth condition, but mutant plants show reduced sensitivity to microtubule-disrupting drugs (PubMed:19392697). Short roots with abnormal twisting (e.g. leftward skewing) in media containing microtubule-disrupting drugs (e.g. oryzalin) (PubMed:28848569).</text>
</comment>
<comment type="similarity">
    <text evidence="10">Belongs to the protein kinase superfamily. CMGC Ser/Thr protein kinase family. MAP kinase subfamily.</text>
</comment>
<comment type="sequence caution" evidence="10">
    <conflict type="erroneous gene model prediction">
        <sequence resource="EMBL-CDS" id="AAF78438"/>
    </conflict>
</comment>
<comment type="sequence caution" evidence="10">
    <conflict type="erroneous gene model prediction">
        <sequence resource="EMBL-CDS" id="AAG51978"/>
    </conflict>
</comment>
<dbReference type="EC" id="2.7.11.24"/>
<dbReference type="EMBL" id="AC018748">
    <property type="protein sequence ID" value="AAF78438.1"/>
    <property type="status" value="ALT_SEQ"/>
    <property type="molecule type" value="Genomic_DNA"/>
</dbReference>
<dbReference type="EMBL" id="AC024260">
    <property type="protein sequence ID" value="AAG51978.1"/>
    <property type="status" value="ALT_SEQ"/>
    <property type="molecule type" value="Genomic_DNA"/>
</dbReference>
<dbReference type="EMBL" id="CP002684">
    <property type="protein sequence ID" value="AEE32950.1"/>
    <property type="molecule type" value="Genomic_DNA"/>
</dbReference>
<dbReference type="EMBL" id="AF360353">
    <property type="protein sequence ID" value="AAK28649.2"/>
    <property type="molecule type" value="mRNA"/>
</dbReference>
<dbReference type="EMBL" id="BT000870">
    <property type="protein sequence ID" value="AAN41270.1"/>
    <property type="molecule type" value="mRNA"/>
</dbReference>
<dbReference type="PIR" id="C96575">
    <property type="entry name" value="C96575"/>
</dbReference>
<dbReference type="RefSeq" id="NP_175756.2">
    <property type="nucleotide sequence ID" value="NM_104229.4"/>
</dbReference>
<dbReference type="SMR" id="Q9C5C0"/>
<dbReference type="BioGRID" id="27011">
    <property type="interactions" value="16"/>
</dbReference>
<dbReference type="FunCoup" id="Q9C5C0">
    <property type="interactions" value="391"/>
</dbReference>
<dbReference type="IntAct" id="Q9C5C0">
    <property type="interactions" value="21"/>
</dbReference>
<dbReference type="STRING" id="3702.Q9C5C0"/>
<dbReference type="GlyGen" id="Q9C5C0">
    <property type="glycosylation" value="2 sites, 1 O-linked glycan (1 site)"/>
</dbReference>
<dbReference type="iPTMnet" id="Q9C5C0"/>
<dbReference type="PaxDb" id="3702-AT1G53510.1"/>
<dbReference type="ProteomicsDB" id="250951"/>
<dbReference type="EnsemblPlants" id="AT1G53510.1">
    <property type="protein sequence ID" value="AT1G53510.1"/>
    <property type="gene ID" value="AT1G53510"/>
</dbReference>
<dbReference type="GeneID" id="841786"/>
<dbReference type="Gramene" id="AT1G53510.1">
    <property type="protein sequence ID" value="AT1G53510.1"/>
    <property type="gene ID" value="AT1G53510"/>
</dbReference>
<dbReference type="KEGG" id="ath:AT1G53510"/>
<dbReference type="Araport" id="AT1G53510"/>
<dbReference type="TAIR" id="AT1G53510">
    <property type="gene designation" value="MPK18"/>
</dbReference>
<dbReference type="eggNOG" id="KOG0660">
    <property type="taxonomic scope" value="Eukaryota"/>
</dbReference>
<dbReference type="HOGENOM" id="CLU_000288_181_13_1"/>
<dbReference type="InParanoid" id="Q9C5C0"/>
<dbReference type="OMA" id="NTHMAID"/>
<dbReference type="OrthoDB" id="2396at2759"/>
<dbReference type="PRO" id="PR:Q9C5C0"/>
<dbReference type="Proteomes" id="UP000006548">
    <property type="component" value="Chromosome 1"/>
</dbReference>
<dbReference type="ExpressionAtlas" id="Q9C5C0">
    <property type="expression patterns" value="baseline and differential"/>
</dbReference>
<dbReference type="GO" id="GO:0005737">
    <property type="term" value="C:cytoplasm"/>
    <property type="evidence" value="ECO:0000314"/>
    <property type="project" value="TAIR"/>
</dbReference>
<dbReference type="GO" id="GO:0005634">
    <property type="term" value="C:nucleus"/>
    <property type="evidence" value="ECO:0000314"/>
    <property type="project" value="TAIR"/>
</dbReference>
<dbReference type="GO" id="GO:0005524">
    <property type="term" value="F:ATP binding"/>
    <property type="evidence" value="ECO:0007669"/>
    <property type="project" value="UniProtKB-KW"/>
</dbReference>
<dbReference type="GO" id="GO:0004707">
    <property type="term" value="F:MAP kinase activity"/>
    <property type="evidence" value="ECO:0000250"/>
    <property type="project" value="TAIR"/>
</dbReference>
<dbReference type="GO" id="GO:0106310">
    <property type="term" value="F:protein serine kinase activity"/>
    <property type="evidence" value="ECO:0007669"/>
    <property type="project" value="RHEA"/>
</dbReference>
<dbReference type="GO" id="GO:0043622">
    <property type="term" value="P:cortical microtubule organization"/>
    <property type="evidence" value="ECO:0000315"/>
    <property type="project" value="TAIR"/>
</dbReference>
<dbReference type="CDD" id="cd07859">
    <property type="entry name" value="STKc_TDY_MAPK"/>
    <property type="match status" value="1"/>
</dbReference>
<dbReference type="FunFam" id="1.10.510.10:FF:000017">
    <property type="entry name" value="Mitogen-activated protein kinase"/>
    <property type="match status" value="1"/>
</dbReference>
<dbReference type="FunFam" id="3.30.200.20:FF:000046">
    <property type="entry name" value="Mitogen-activated protein kinase"/>
    <property type="match status" value="1"/>
</dbReference>
<dbReference type="Gene3D" id="3.30.200.20">
    <property type="entry name" value="Phosphorylase Kinase, domain 1"/>
    <property type="match status" value="1"/>
</dbReference>
<dbReference type="Gene3D" id="1.10.510.10">
    <property type="entry name" value="Transferase(Phosphotransferase) domain 1"/>
    <property type="match status" value="1"/>
</dbReference>
<dbReference type="InterPro" id="IPR011009">
    <property type="entry name" value="Kinase-like_dom_sf"/>
</dbReference>
<dbReference type="InterPro" id="IPR050117">
    <property type="entry name" value="MAP_kinase"/>
</dbReference>
<dbReference type="InterPro" id="IPR003527">
    <property type="entry name" value="MAP_kinase_CS"/>
</dbReference>
<dbReference type="InterPro" id="IPR000719">
    <property type="entry name" value="Prot_kinase_dom"/>
</dbReference>
<dbReference type="InterPro" id="IPR017441">
    <property type="entry name" value="Protein_kinase_ATP_BS"/>
</dbReference>
<dbReference type="PANTHER" id="PTHR24055">
    <property type="entry name" value="MITOGEN-ACTIVATED PROTEIN KINASE"/>
    <property type="match status" value="1"/>
</dbReference>
<dbReference type="Pfam" id="PF00069">
    <property type="entry name" value="Pkinase"/>
    <property type="match status" value="1"/>
</dbReference>
<dbReference type="SMART" id="SM00220">
    <property type="entry name" value="S_TKc"/>
    <property type="match status" value="1"/>
</dbReference>
<dbReference type="SUPFAM" id="SSF56112">
    <property type="entry name" value="Protein kinase-like (PK-like)"/>
    <property type="match status" value="1"/>
</dbReference>
<dbReference type="PROSITE" id="PS01351">
    <property type="entry name" value="MAPK"/>
    <property type="match status" value="1"/>
</dbReference>
<dbReference type="PROSITE" id="PS00107">
    <property type="entry name" value="PROTEIN_KINASE_ATP"/>
    <property type="match status" value="1"/>
</dbReference>
<dbReference type="PROSITE" id="PS50011">
    <property type="entry name" value="PROTEIN_KINASE_DOM"/>
    <property type="match status" value="1"/>
</dbReference>
<sequence>MQQNQVKKGTKEMEFFTEYGDANRYRILEVIGKGSYGVVCAAIDTHTGEKVAIKKINDVFEHISDALRILREVKLLRLLRHPDIVEIKSIMLPPSKREFKDIYVVFELMESDLHQVIKANDDLTREHHQFFLYQMLRALKFMHTANVYHRDLKPKNILANANCKLKVCDFGLARVAFNDTPTTVFWTDYVATRWYRAPELCGSFFSKYTPAIDVWSIGCIFAEVLTGKPLFPGKSVVHQLELITDLLGTPKSETISGVRNDKARKYLTEMRKKNPVTFSQKFSKADPLALRLLQRLLAFDPKDRPTPAEALADPYFKGLSKIEREPSSQQISKMEFEFERRRLTKDDIRELIYREILEYHPQLLKDYMSGSEGSNFVYPSAIGHLRQQFTYLEENSSRNGPVIPLERKHASLPRSTVHSTVVHSTSQPNLGATDSRRVSFEPSKNGASSAGHPSTSAYPTKSIGPPPRVPPSGRPGRVVESSVSYENGRNLKEAYFRSAVSSPHCYFRPNTMTNPENRNIEASSFPPKPQNPVHQFSPTEPPAATTNQADVETMNHPNPYFQPQLPKTDQLNNNTHMAIDAKLLQAQSQFGPAGAAAVAVAAHRNIGTISYSAAS</sequence>
<name>MPK18_ARATH</name>
<accession>Q9C5C0</accession>
<accession>Q9LPG7</accession>
<proteinExistence type="evidence at protein level"/>
<keyword id="KW-0067">ATP-binding</keyword>
<keyword id="KW-0963">Cytoplasm</keyword>
<keyword id="KW-0418">Kinase</keyword>
<keyword id="KW-0547">Nucleotide-binding</keyword>
<keyword id="KW-0539">Nucleus</keyword>
<keyword id="KW-0597">Phosphoprotein</keyword>
<keyword id="KW-1185">Reference proteome</keyword>
<keyword id="KW-0723">Serine/threonine-protein kinase</keyword>
<keyword id="KW-0808">Transferase</keyword>
<reference key="1">
    <citation type="journal article" date="2000" name="Nature">
        <title>Sequence and analysis of chromosome 1 of the plant Arabidopsis thaliana.</title>
        <authorList>
            <person name="Theologis A."/>
            <person name="Ecker J.R."/>
            <person name="Palm C.J."/>
            <person name="Federspiel N.A."/>
            <person name="Kaul S."/>
            <person name="White O."/>
            <person name="Alonso J."/>
            <person name="Altafi H."/>
            <person name="Araujo R."/>
            <person name="Bowman C.L."/>
            <person name="Brooks S.Y."/>
            <person name="Buehler E."/>
            <person name="Chan A."/>
            <person name="Chao Q."/>
            <person name="Chen H."/>
            <person name="Cheuk R.F."/>
            <person name="Chin C.W."/>
            <person name="Chung M.K."/>
            <person name="Conn L."/>
            <person name="Conway A.B."/>
            <person name="Conway A.R."/>
            <person name="Creasy T.H."/>
            <person name="Dewar K."/>
            <person name="Dunn P."/>
            <person name="Etgu P."/>
            <person name="Feldblyum T.V."/>
            <person name="Feng J.-D."/>
            <person name="Fong B."/>
            <person name="Fujii C.Y."/>
            <person name="Gill J.E."/>
            <person name="Goldsmith A.D."/>
            <person name="Haas B."/>
            <person name="Hansen N.F."/>
            <person name="Hughes B."/>
            <person name="Huizar L."/>
            <person name="Hunter J.L."/>
            <person name="Jenkins J."/>
            <person name="Johnson-Hopson C."/>
            <person name="Khan S."/>
            <person name="Khaykin E."/>
            <person name="Kim C.J."/>
            <person name="Koo H.L."/>
            <person name="Kremenetskaia I."/>
            <person name="Kurtz D.B."/>
            <person name="Kwan A."/>
            <person name="Lam B."/>
            <person name="Langin-Hooper S."/>
            <person name="Lee A."/>
            <person name="Lee J.M."/>
            <person name="Lenz C.A."/>
            <person name="Li J.H."/>
            <person name="Li Y.-P."/>
            <person name="Lin X."/>
            <person name="Liu S.X."/>
            <person name="Liu Z.A."/>
            <person name="Luros J.S."/>
            <person name="Maiti R."/>
            <person name="Marziali A."/>
            <person name="Militscher J."/>
            <person name="Miranda M."/>
            <person name="Nguyen M."/>
            <person name="Nierman W.C."/>
            <person name="Osborne B.I."/>
            <person name="Pai G."/>
            <person name="Peterson J."/>
            <person name="Pham P.K."/>
            <person name="Rizzo M."/>
            <person name="Rooney T."/>
            <person name="Rowley D."/>
            <person name="Sakano H."/>
            <person name="Salzberg S.L."/>
            <person name="Schwartz J.R."/>
            <person name="Shinn P."/>
            <person name="Southwick A.M."/>
            <person name="Sun H."/>
            <person name="Tallon L.J."/>
            <person name="Tambunga G."/>
            <person name="Toriumi M.J."/>
            <person name="Town C.D."/>
            <person name="Utterback T."/>
            <person name="Van Aken S."/>
            <person name="Vaysberg M."/>
            <person name="Vysotskaia V.S."/>
            <person name="Walker M."/>
            <person name="Wu D."/>
            <person name="Yu G."/>
            <person name="Fraser C.M."/>
            <person name="Venter J.C."/>
            <person name="Davis R.W."/>
        </authorList>
    </citation>
    <scope>NUCLEOTIDE SEQUENCE [LARGE SCALE GENOMIC DNA]</scope>
    <source>
        <strain>cv. Columbia</strain>
    </source>
</reference>
<reference key="2">
    <citation type="journal article" date="2017" name="Plant J.">
        <title>Araport11: a complete reannotation of the Arabidopsis thaliana reference genome.</title>
        <authorList>
            <person name="Cheng C.Y."/>
            <person name="Krishnakumar V."/>
            <person name="Chan A.P."/>
            <person name="Thibaud-Nissen F."/>
            <person name="Schobel S."/>
            <person name="Town C.D."/>
        </authorList>
    </citation>
    <scope>GENOME REANNOTATION</scope>
    <source>
        <strain>cv. Columbia</strain>
    </source>
</reference>
<reference key="3">
    <citation type="journal article" date="2003" name="Science">
        <title>Empirical analysis of transcriptional activity in the Arabidopsis genome.</title>
        <authorList>
            <person name="Yamada K."/>
            <person name="Lim J."/>
            <person name="Dale J.M."/>
            <person name="Chen H."/>
            <person name="Shinn P."/>
            <person name="Palm C.J."/>
            <person name="Southwick A.M."/>
            <person name="Wu H.C."/>
            <person name="Kim C.J."/>
            <person name="Nguyen M."/>
            <person name="Pham P.K."/>
            <person name="Cheuk R.F."/>
            <person name="Karlin-Newmann G."/>
            <person name="Liu S.X."/>
            <person name="Lam B."/>
            <person name="Sakano H."/>
            <person name="Wu T."/>
            <person name="Yu G."/>
            <person name="Miranda M."/>
            <person name="Quach H.L."/>
            <person name="Tripp M."/>
            <person name="Chang C.H."/>
            <person name="Lee J.M."/>
            <person name="Toriumi M.J."/>
            <person name="Chan M.M."/>
            <person name="Tang C.C."/>
            <person name="Onodera C.S."/>
            <person name="Deng J.M."/>
            <person name="Akiyama K."/>
            <person name="Ansari Y."/>
            <person name="Arakawa T."/>
            <person name="Banh J."/>
            <person name="Banno F."/>
            <person name="Bowser L."/>
            <person name="Brooks S.Y."/>
            <person name="Carninci P."/>
            <person name="Chao Q."/>
            <person name="Choy N."/>
            <person name="Enju A."/>
            <person name="Goldsmith A.D."/>
            <person name="Gurjal M."/>
            <person name="Hansen N.F."/>
            <person name="Hayashizaki Y."/>
            <person name="Johnson-Hopson C."/>
            <person name="Hsuan V.W."/>
            <person name="Iida K."/>
            <person name="Karnes M."/>
            <person name="Khan S."/>
            <person name="Koesema E."/>
            <person name="Ishida J."/>
            <person name="Jiang P.X."/>
            <person name="Jones T."/>
            <person name="Kawai J."/>
            <person name="Kamiya A."/>
            <person name="Meyers C."/>
            <person name="Nakajima M."/>
            <person name="Narusaka M."/>
            <person name="Seki M."/>
            <person name="Sakurai T."/>
            <person name="Satou M."/>
            <person name="Tamse R."/>
            <person name="Vaysberg M."/>
            <person name="Wallender E.K."/>
            <person name="Wong C."/>
            <person name="Yamamura Y."/>
            <person name="Yuan S."/>
            <person name="Shinozaki K."/>
            <person name="Davis R.W."/>
            <person name="Theologis A."/>
            <person name="Ecker J.R."/>
        </authorList>
    </citation>
    <scope>NUCLEOTIDE SEQUENCE [LARGE SCALE MRNA] OF 13-615</scope>
    <source>
        <strain>cv. Columbia</strain>
    </source>
</reference>
<reference key="4">
    <citation type="journal article" date="2002" name="Trends Plant Sci.">
        <title>Mitogen-activated protein kinase cascades in plants: a new nomenclature.</title>
        <authorList>
            <consortium name="MAPK group"/>
        </authorList>
    </citation>
    <scope>GENE FAMILY</scope>
    <scope>NOMENCLATURE</scope>
</reference>
<reference key="5">
    <citation type="journal article" date="2006" name="Trends Plant Sci.">
        <title>Ancient signals: comparative genomics of plant MAPK and MAPKK gene families.</title>
        <authorList>
            <person name="Hamel L.P."/>
            <person name="Nicole M.C."/>
            <person name="Sritubtim S."/>
            <person name="Morency M.J."/>
            <person name="Ellis M."/>
            <person name="Ehlting J."/>
            <person name="Beaudoin N."/>
            <person name="Barbazuk B."/>
            <person name="Klessig D."/>
            <person name="Lee J."/>
            <person name="Martin G."/>
            <person name="Mundy J."/>
            <person name="Ohashi Y."/>
            <person name="Scheel D."/>
            <person name="Sheen J."/>
            <person name="Xing T."/>
            <person name="Zhang S."/>
            <person name="Seguin A."/>
            <person name="Ellis B.E."/>
        </authorList>
    </citation>
    <scope>GENE FAMILY</scope>
</reference>
<reference key="6">
    <citation type="journal article" date="2009" name="Plant J.">
        <title>Arabidopsis mitogen-activated protein kinase MPK18 mediates cortical microtubule functions in plant cells.</title>
        <authorList>
            <person name="Walia A."/>
            <person name="Lee J.S."/>
            <person name="Wasteneys G."/>
            <person name="Ellis B."/>
        </authorList>
    </citation>
    <scope>FUNCTION</scope>
    <scope>INTERACTION WITH PHS1</scope>
    <scope>ACTIVITY REGULATION</scope>
    <scope>SUBCELLULAR LOCATION</scope>
    <scope>TISSUE SPECIFICITY</scope>
    <scope>DISRUPTION PHENOTYPE</scope>
</reference>
<reference key="7">
    <citation type="journal article" date="2017" name="Front. Plant Sci.">
        <title>The Arabidopsis mitogen-activated protein kinase kinase kinase 20 (MKKK20) acts upstream of MKK3 and MPK18 in two separate signaling pathways involved in root microtubule functions.</title>
        <authorList>
            <person name="Benhamman R."/>
            <person name="Bai F."/>
            <person name="Drory S.B."/>
            <person name="Loubert-Hudon A."/>
            <person name="Ellis B."/>
            <person name="Matton D.P."/>
        </authorList>
    </citation>
    <scope>FUNCTION</scope>
    <scope>DISRUPTION PHENOTYPE</scope>
    <scope>TISSUE SPECIFICITY</scope>
    <scope>INTERACTION WITH MAPKKK20</scope>
    <scope>PHOSPHORYLATION</scope>
    <scope>SUBCELLULAR LOCATION</scope>
    <source>
        <strain>cv. Columbia</strain>
    </source>
</reference>
<reference key="8">
    <citation type="journal article" date="2018" name="Front. Plant Sci.">
        <title>Mitogen-activated protein kinase cascades in plant hormone signaling.</title>
        <authorList>
            <person name="Jagodzik P."/>
            <person name="Tajdel-Zielinska M."/>
            <person name="Ciesla A."/>
            <person name="Marczak M."/>
            <person name="Ludwikow A."/>
        </authorList>
    </citation>
    <scope>REVIEW ON MITOGEN-ACTIVATED PROTEIN KINASE CASCADES</scope>
</reference>
<gene>
    <name evidence="7 8 9" type="primary">MPK18</name>
    <name evidence="11" type="ordered locus">At1g53510</name>
    <name evidence="13" type="ORF">F22G10.12</name>
    <name evidence="12" type="ORF">T3F20.17</name>
</gene>
<evidence type="ECO:0000250" key="1">
    <source>
        <dbReference type="UniProtKB" id="A9T142"/>
    </source>
</evidence>
<evidence type="ECO:0000250" key="2">
    <source>
        <dbReference type="UniProtKB" id="Q39026"/>
    </source>
</evidence>
<evidence type="ECO:0000255" key="3">
    <source>
        <dbReference type="PROSITE-ProRule" id="PRU00159"/>
    </source>
</evidence>
<evidence type="ECO:0000256" key="4">
    <source>
        <dbReference type="SAM" id="MobiDB-lite"/>
    </source>
</evidence>
<evidence type="ECO:0000269" key="5">
    <source>
    </source>
</evidence>
<evidence type="ECO:0000269" key="6">
    <source>
    </source>
</evidence>
<evidence type="ECO:0000303" key="7">
    <source>
    </source>
</evidence>
<evidence type="ECO:0000303" key="8">
    <source>
    </source>
</evidence>
<evidence type="ECO:0000303" key="9">
    <source>
    </source>
</evidence>
<evidence type="ECO:0000305" key="10"/>
<evidence type="ECO:0000312" key="11">
    <source>
        <dbReference type="Araport" id="AT1G53510"/>
    </source>
</evidence>
<evidence type="ECO:0000312" key="12">
    <source>
        <dbReference type="EMBL" id="AAF78438.1"/>
    </source>
</evidence>
<evidence type="ECO:0000312" key="13">
    <source>
        <dbReference type="EMBL" id="AAG51978.1"/>
    </source>
</evidence>
<feature type="chain" id="PRO_0000245818" description="Mitogen-activated protein kinase 18">
    <location>
        <begin position="1"/>
        <end position="615"/>
    </location>
</feature>
<feature type="domain" description="Protein kinase" evidence="3">
    <location>
        <begin position="25"/>
        <end position="316"/>
    </location>
</feature>
<feature type="region of interest" description="Disordered" evidence="4">
    <location>
        <begin position="414"/>
        <end position="483"/>
    </location>
</feature>
<feature type="region of interest" description="Disordered" evidence="4">
    <location>
        <begin position="510"/>
        <end position="544"/>
    </location>
</feature>
<feature type="short sequence motif" description="TXY">
    <location>
        <begin position="187"/>
        <end position="189"/>
    </location>
</feature>
<feature type="compositionally biased region" description="Low complexity" evidence="4">
    <location>
        <begin position="415"/>
        <end position="426"/>
    </location>
</feature>
<feature type="compositionally biased region" description="Polar residues" evidence="4">
    <location>
        <begin position="445"/>
        <end position="459"/>
    </location>
</feature>
<feature type="compositionally biased region" description="Pro residues" evidence="4">
    <location>
        <begin position="464"/>
        <end position="473"/>
    </location>
</feature>
<feature type="compositionally biased region" description="Polar residues" evidence="4">
    <location>
        <begin position="510"/>
        <end position="522"/>
    </location>
</feature>
<feature type="compositionally biased region" description="Polar residues" evidence="4">
    <location>
        <begin position="532"/>
        <end position="544"/>
    </location>
</feature>
<feature type="active site" description="Proton acceptor" evidence="3">
    <location>
        <position position="151"/>
    </location>
</feature>
<feature type="binding site" evidence="3">
    <location>
        <begin position="31"/>
        <end position="39"/>
    </location>
    <ligand>
        <name>ATP</name>
        <dbReference type="ChEBI" id="CHEBI:30616"/>
    </ligand>
</feature>
<feature type="binding site" evidence="3">
    <location>
        <position position="54"/>
    </location>
    <ligand>
        <name>ATP</name>
        <dbReference type="ChEBI" id="CHEBI:30616"/>
    </ligand>
</feature>
<feature type="modified residue" description="Phosphothreonine" evidence="2">
    <location>
        <position position="187"/>
    </location>
</feature>
<feature type="modified residue" description="Phosphotyrosine" evidence="2">
    <location>
        <position position="189"/>
    </location>
</feature>
<feature type="modified residue" description="Phosphothreonine" evidence="2">
    <location>
        <position position="192"/>
    </location>
</feature>